<dbReference type="EC" id="3.6.1.66" evidence="1"/>
<dbReference type="EMBL" id="AE017180">
    <property type="protein sequence ID" value="AAR35171.1"/>
    <property type="molecule type" value="Genomic_DNA"/>
</dbReference>
<dbReference type="RefSeq" id="NP_952844.1">
    <property type="nucleotide sequence ID" value="NC_002939.5"/>
</dbReference>
<dbReference type="RefSeq" id="WP_010942438.1">
    <property type="nucleotide sequence ID" value="NC_002939.5"/>
</dbReference>
<dbReference type="SMR" id="Q74C80"/>
<dbReference type="FunCoup" id="Q74C80">
    <property type="interactions" value="528"/>
</dbReference>
<dbReference type="STRING" id="243231.GSU1794"/>
<dbReference type="EnsemblBacteria" id="AAR35171">
    <property type="protein sequence ID" value="AAR35171"/>
    <property type="gene ID" value="GSU1794"/>
</dbReference>
<dbReference type="KEGG" id="gsu:GSU1794"/>
<dbReference type="PATRIC" id="fig|243231.5.peg.1832"/>
<dbReference type="eggNOG" id="COG0127">
    <property type="taxonomic scope" value="Bacteria"/>
</dbReference>
<dbReference type="HOGENOM" id="CLU_082080_0_2_7"/>
<dbReference type="InParanoid" id="Q74C80"/>
<dbReference type="OrthoDB" id="9807456at2"/>
<dbReference type="Proteomes" id="UP000000577">
    <property type="component" value="Chromosome"/>
</dbReference>
<dbReference type="GO" id="GO:0005737">
    <property type="term" value="C:cytoplasm"/>
    <property type="evidence" value="ECO:0000318"/>
    <property type="project" value="GO_Central"/>
</dbReference>
<dbReference type="GO" id="GO:0005829">
    <property type="term" value="C:cytosol"/>
    <property type="evidence" value="ECO:0000318"/>
    <property type="project" value="GO_Central"/>
</dbReference>
<dbReference type="GO" id="GO:0035870">
    <property type="term" value="F:dITP diphosphatase activity"/>
    <property type="evidence" value="ECO:0007669"/>
    <property type="project" value="RHEA"/>
</dbReference>
<dbReference type="GO" id="GO:0036220">
    <property type="term" value="F:ITP diphosphatase activity"/>
    <property type="evidence" value="ECO:0007669"/>
    <property type="project" value="UniProtKB-EC"/>
</dbReference>
<dbReference type="GO" id="GO:0046872">
    <property type="term" value="F:metal ion binding"/>
    <property type="evidence" value="ECO:0007669"/>
    <property type="project" value="UniProtKB-KW"/>
</dbReference>
<dbReference type="GO" id="GO:0047429">
    <property type="term" value="F:nucleoside triphosphate diphosphatase activity"/>
    <property type="evidence" value="ECO:0000318"/>
    <property type="project" value="GO_Central"/>
</dbReference>
<dbReference type="GO" id="GO:0000166">
    <property type="term" value="F:nucleotide binding"/>
    <property type="evidence" value="ECO:0007669"/>
    <property type="project" value="UniProtKB-KW"/>
</dbReference>
<dbReference type="GO" id="GO:0017111">
    <property type="term" value="F:ribonucleoside triphosphate phosphatase activity"/>
    <property type="evidence" value="ECO:0007669"/>
    <property type="project" value="InterPro"/>
</dbReference>
<dbReference type="GO" id="GO:0036222">
    <property type="term" value="F:XTP diphosphatase activity"/>
    <property type="evidence" value="ECO:0007669"/>
    <property type="project" value="RHEA"/>
</dbReference>
<dbReference type="GO" id="GO:0009143">
    <property type="term" value="P:nucleoside triphosphate catabolic process"/>
    <property type="evidence" value="ECO:0000318"/>
    <property type="project" value="GO_Central"/>
</dbReference>
<dbReference type="GO" id="GO:0009117">
    <property type="term" value="P:nucleotide metabolic process"/>
    <property type="evidence" value="ECO:0007669"/>
    <property type="project" value="UniProtKB-KW"/>
</dbReference>
<dbReference type="GO" id="GO:0009146">
    <property type="term" value="P:purine nucleoside triphosphate catabolic process"/>
    <property type="evidence" value="ECO:0007669"/>
    <property type="project" value="UniProtKB-UniRule"/>
</dbReference>
<dbReference type="CDD" id="cd00515">
    <property type="entry name" value="HAM1"/>
    <property type="match status" value="1"/>
</dbReference>
<dbReference type="FunFam" id="3.90.950.10:FF:000001">
    <property type="entry name" value="dITP/XTP pyrophosphatase"/>
    <property type="match status" value="1"/>
</dbReference>
<dbReference type="Gene3D" id="3.90.950.10">
    <property type="match status" value="1"/>
</dbReference>
<dbReference type="HAMAP" id="MF_01405">
    <property type="entry name" value="Non_canon_purine_NTPase"/>
    <property type="match status" value="1"/>
</dbReference>
<dbReference type="InterPro" id="IPR020922">
    <property type="entry name" value="dITP/XTP_pyrophosphatase"/>
</dbReference>
<dbReference type="InterPro" id="IPR029001">
    <property type="entry name" value="ITPase-like_fam"/>
</dbReference>
<dbReference type="InterPro" id="IPR002637">
    <property type="entry name" value="RdgB/HAM1"/>
</dbReference>
<dbReference type="NCBIfam" id="NF011397">
    <property type="entry name" value="PRK14822.1"/>
    <property type="match status" value="1"/>
</dbReference>
<dbReference type="NCBIfam" id="TIGR00042">
    <property type="entry name" value="RdgB/HAM1 family non-canonical purine NTP pyrophosphatase"/>
    <property type="match status" value="1"/>
</dbReference>
<dbReference type="PANTHER" id="PTHR11067:SF9">
    <property type="entry name" value="INOSINE TRIPHOSPHATE PYROPHOSPHATASE"/>
    <property type="match status" value="1"/>
</dbReference>
<dbReference type="PANTHER" id="PTHR11067">
    <property type="entry name" value="INOSINE TRIPHOSPHATE PYROPHOSPHATASE/HAM1 PROTEIN"/>
    <property type="match status" value="1"/>
</dbReference>
<dbReference type="Pfam" id="PF01725">
    <property type="entry name" value="Ham1p_like"/>
    <property type="match status" value="1"/>
</dbReference>
<dbReference type="SUPFAM" id="SSF52972">
    <property type="entry name" value="ITPase-like"/>
    <property type="match status" value="1"/>
</dbReference>
<comment type="function">
    <text evidence="1">Pyrophosphatase that catalyzes the hydrolysis of nucleoside triphosphates to their monophosphate derivatives, with a high preference for the non-canonical purine nucleotides XTP (xanthosine triphosphate), dITP (deoxyinosine triphosphate) and ITP. Seems to function as a house-cleaning enzyme that removes non-canonical purine nucleotides from the nucleotide pool, thus preventing their incorporation into DNA/RNA and avoiding chromosomal lesions.</text>
</comment>
<comment type="catalytic activity">
    <reaction evidence="1">
        <text>XTP + H2O = XMP + diphosphate + H(+)</text>
        <dbReference type="Rhea" id="RHEA:28610"/>
        <dbReference type="ChEBI" id="CHEBI:15377"/>
        <dbReference type="ChEBI" id="CHEBI:15378"/>
        <dbReference type="ChEBI" id="CHEBI:33019"/>
        <dbReference type="ChEBI" id="CHEBI:57464"/>
        <dbReference type="ChEBI" id="CHEBI:61314"/>
        <dbReference type="EC" id="3.6.1.66"/>
    </reaction>
</comment>
<comment type="catalytic activity">
    <reaction evidence="1">
        <text>dITP + H2O = dIMP + diphosphate + H(+)</text>
        <dbReference type="Rhea" id="RHEA:28342"/>
        <dbReference type="ChEBI" id="CHEBI:15377"/>
        <dbReference type="ChEBI" id="CHEBI:15378"/>
        <dbReference type="ChEBI" id="CHEBI:33019"/>
        <dbReference type="ChEBI" id="CHEBI:61194"/>
        <dbReference type="ChEBI" id="CHEBI:61382"/>
        <dbReference type="EC" id="3.6.1.66"/>
    </reaction>
</comment>
<comment type="catalytic activity">
    <reaction evidence="1">
        <text>ITP + H2O = IMP + diphosphate + H(+)</text>
        <dbReference type="Rhea" id="RHEA:29399"/>
        <dbReference type="ChEBI" id="CHEBI:15377"/>
        <dbReference type="ChEBI" id="CHEBI:15378"/>
        <dbReference type="ChEBI" id="CHEBI:33019"/>
        <dbReference type="ChEBI" id="CHEBI:58053"/>
        <dbReference type="ChEBI" id="CHEBI:61402"/>
        <dbReference type="EC" id="3.6.1.66"/>
    </reaction>
</comment>
<comment type="cofactor">
    <cofactor evidence="1">
        <name>Mg(2+)</name>
        <dbReference type="ChEBI" id="CHEBI:18420"/>
    </cofactor>
    <text evidence="1">Binds 1 Mg(2+) ion per subunit.</text>
</comment>
<comment type="subunit">
    <text evidence="1">Homodimer.</text>
</comment>
<comment type="similarity">
    <text evidence="1">Belongs to the HAM1 NTPase family.</text>
</comment>
<gene>
    <name type="ordered locus">GSU1794</name>
</gene>
<evidence type="ECO:0000255" key="1">
    <source>
        <dbReference type="HAMAP-Rule" id="MF_01405"/>
    </source>
</evidence>
<feature type="chain" id="PRO_0000178170" description="dITP/XTP pyrophosphatase">
    <location>
        <begin position="1"/>
        <end position="199"/>
    </location>
</feature>
<feature type="active site" description="Proton acceptor" evidence="1">
    <location>
        <position position="70"/>
    </location>
</feature>
<feature type="binding site" evidence="1">
    <location>
        <begin position="8"/>
        <end position="13"/>
    </location>
    <ligand>
        <name>substrate</name>
    </ligand>
</feature>
<feature type="binding site" evidence="1">
    <location>
        <position position="41"/>
    </location>
    <ligand>
        <name>Mg(2+)</name>
        <dbReference type="ChEBI" id="CHEBI:18420"/>
    </ligand>
</feature>
<feature type="binding site" evidence="1">
    <location>
        <position position="70"/>
    </location>
    <ligand>
        <name>Mg(2+)</name>
        <dbReference type="ChEBI" id="CHEBI:18420"/>
    </ligand>
</feature>
<feature type="binding site" evidence="1">
    <location>
        <position position="71"/>
    </location>
    <ligand>
        <name>substrate</name>
    </ligand>
</feature>
<feature type="binding site" evidence="1">
    <location>
        <begin position="153"/>
        <end position="156"/>
    </location>
    <ligand>
        <name>substrate</name>
    </ligand>
</feature>
<feature type="binding site" evidence="1">
    <location>
        <position position="176"/>
    </location>
    <ligand>
        <name>substrate</name>
    </ligand>
</feature>
<feature type="binding site" evidence="1">
    <location>
        <begin position="181"/>
        <end position="182"/>
    </location>
    <ligand>
        <name>substrate</name>
    </ligand>
</feature>
<name>IXTPA_GEOSL</name>
<accession>Q74C80</accession>
<proteinExistence type="inferred from homology"/>
<keyword id="KW-0378">Hydrolase</keyword>
<keyword id="KW-0460">Magnesium</keyword>
<keyword id="KW-0479">Metal-binding</keyword>
<keyword id="KW-0546">Nucleotide metabolism</keyword>
<keyword id="KW-0547">Nucleotide-binding</keyword>
<keyword id="KW-1185">Reference proteome</keyword>
<reference key="1">
    <citation type="journal article" date="2003" name="Science">
        <title>Genome of Geobacter sulfurreducens: metal reduction in subsurface environments.</title>
        <authorList>
            <person name="Methe B.A."/>
            <person name="Nelson K.E."/>
            <person name="Eisen J.A."/>
            <person name="Paulsen I.T."/>
            <person name="Nelson W.C."/>
            <person name="Heidelberg J.F."/>
            <person name="Wu D."/>
            <person name="Wu M."/>
            <person name="Ward N.L."/>
            <person name="Beanan M.J."/>
            <person name="Dodson R.J."/>
            <person name="Madupu R."/>
            <person name="Brinkac L.M."/>
            <person name="Daugherty S.C."/>
            <person name="DeBoy R.T."/>
            <person name="Durkin A.S."/>
            <person name="Gwinn M.L."/>
            <person name="Kolonay J.F."/>
            <person name="Sullivan S.A."/>
            <person name="Haft D.H."/>
            <person name="Selengut J."/>
            <person name="Davidsen T.M."/>
            <person name="Zafar N."/>
            <person name="White O."/>
            <person name="Tran B."/>
            <person name="Romero C."/>
            <person name="Forberger H.A."/>
            <person name="Weidman J.F."/>
            <person name="Khouri H.M."/>
            <person name="Feldblyum T.V."/>
            <person name="Utterback T.R."/>
            <person name="Van Aken S.E."/>
            <person name="Lovley D.R."/>
            <person name="Fraser C.M."/>
        </authorList>
    </citation>
    <scope>NUCLEOTIDE SEQUENCE [LARGE SCALE GENOMIC DNA]</scope>
    <source>
        <strain>ATCC 51573 / DSM 12127 / PCA</strain>
    </source>
</reference>
<protein>
    <recommendedName>
        <fullName evidence="1">dITP/XTP pyrophosphatase</fullName>
        <ecNumber evidence="1">3.6.1.66</ecNumber>
    </recommendedName>
    <alternativeName>
        <fullName evidence="1">Non-canonical purine NTP pyrophosphatase</fullName>
    </alternativeName>
    <alternativeName>
        <fullName evidence="1">Non-standard purine NTP pyrophosphatase</fullName>
    </alternativeName>
    <alternativeName>
        <fullName evidence="1">Nucleoside-triphosphate diphosphatase</fullName>
    </alternativeName>
    <alternativeName>
        <fullName evidence="1">Nucleoside-triphosphate pyrophosphatase</fullName>
        <shortName evidence="1">NTPase</shortName>
    </alternativeName>
</protein>
<organism>
    <name type="scientific">Geobacter sulfurreducens (strain ATCC 51573 / DSM 12127 / PCA)</name>
    <dbReference type="NCBI Taxonomy" id="243231"/>
    <lineage>
        <taxon>Bacteria</taxon>
        <taxon>Pseudomonadati</taxon>
        <taxon>Thermodesulfobacteriota</taxon>
        <taxon>Desulfuromonadia</taxon>
        <taxon>Geobacterales</taxon>
        <taxon>Geobacteraceae</taxon>
        <taxon>Geobacter</taxon>
    </lineage>
</organism>
<sequence>MTRLVVATRNKGKLREIAAILDGLPFTLLSLEDFPDFPEVEEDGKTFEENALKKASVAANITGLPALADDSGLVVDALDGKPGVYSARYSGENASDEANNAKLLSELESVPYEERTAAFRCTIALCSPGGKRYTFSGELHGVILDSPRGTGGFGYDPLFFVSEKGATMAELPLEAKNAVSHRGRALALLKDHLGWQGIE</sequence>